<reference key="1">
    <citation type="submission" date="2007-03" db="EMBL/GenBank/DDBJ databases">
        <title>Complete sequence of Shewanella loihica PV-4.</title>
        <authorList>
            <consortium name="US DOE Joint Genome Institute"/>
            <person name="Copeland A."/>
            <person name="Lucas S."/>
            <person name="Lapidus A."/>
            <person name="Barry K."/>
            <person name="Detter J.C."/>
            <person name="Glavina del Rio T."/>
            <person name="Hammon N."/>
            <person name="Israni S."/>
            <person name="Dalin E."/>
            <person name="Tice H."/>
            <person name="Pitluck S."/>
            <person name="Chain P."/>
            <person name="Malfatti S."/>
            <person name="Shin M."/>
            <person name="Vergez L."/>
            <person name="Schmutz J."/>
            <person name="Larimer F."/>
            <person name="Land M."/>
            <person name="Hauser L."/>
            <person name="Kyrpides N."/>
            <person name="Mikhailova N."/>
            <person name="Romine M.F."/>
            <person name="Serres G."/>
            <person name="Fredrickson J."/>
            <person name="Tiedje J."/>
            <person name="Richardson P."/>
        </authorList>
    </citation>
    <scope>NUCLEOTIDE SEQUENCE [LARGE SCALE GENOMIC DNA]</scope>
    <source>
        <strain>ATCC BAA-1088 / PV-4</strain>
    </source>
</reference>
<sequence>MQEQYLPSEIEAKVQQHWQDTKTFEVTEDESKEKFYCLSMFPYPSGRLHMGHVRNYTIGDVVARYQRLQGKNVLQPIGWDSFGLPAENAAINNKTAPAPWTYENIDYMKNQLKMLGFGYDWSREIATCTPEYYRWEQWFFTKLYEKGLVYKKTASVNWCPNDETVLANEQVQDGCCWRCDTQVVQKEIPQWFIKITDYAEELLNDIDQLDEWPEQVKTMQRNWIGRSEGIEMTFQVEGSDQSFDIYTTRPDTVMGVTYVAIAAGHPLAQQAAENNPVLAEFIEECKNADTTEAAMAAMEKKGVDTGLKAIHPLTGKLVPIWAANFVLMNYGTGAVMSVPGHDQRDYEFATKYGLPIVGVIKPADGELDISEEAYTEKGILFNSGDSFPELDGLDFQAAFDAIDAKLSSEGKGKRQVNYRLRDWGVSRQRYWGAPIPMVTLADGTVMPTPEDQLPVILPEDVVMDGIQSPIKADKEWAKTQVNGQEAFRETDTFDTFMESSWYYARYCSPKADQMLDPAKANYWLPVDQYIGGIEHACMHLLYFRFFHKLLRDIGLVNSDEPAKRLLTQGMVLADAFYYTDDKGARVWVSPNDAKVTETDDKGRIVKAVDSQGHELVYTGMSKMSKSKNNGIDPQEMVDKYGADTVRLFMMFASPPELTLEWQESSVEGAHRFIKRLWKLAHDHVSQGPTVALNVASLDSAQKELRRELHKTIAKVGDDIERRQMFNTAIASVMELMNRLQKAPMESEQDRALMQEALCAVVRLLYPIIPHTSFELWQALGHEETIENVLWPVVDESALVEDSKLIIVQVNGKLRAKVTVAADADKDTVEAAGMAEEGVIKHTEGKTVRKVIYVPGKLLNIVAN</sequence>
<evidence type="ECO:0000255" key="1">
    <source>
        <dbReference type="HAMAP-Rule" id="MF_00049"/>
    </source>
</evidence>
<keyword id="KW-0030">Aminoacyl-tRNA synthetase</keyword>
<keyword id="KW-0067">ATP-binding</keyword>
<keyword id="KW-0963">Cytoplasm</keyword>
<keyword id="KW-0436">Ligase</keyword>
<keyword id="KW-0547">Nucleotide-binding</keyword>
<keyword id="KW-0648">Protein biosynthesis</keyword>
<keyword id="KW-1185">Reference proteome</keyword>
<organism>
    <name type="scientific">Shewanella loihica (strain ATCC BAA-1088 / PV-4)</name>
    <dbReference type="NCBI Taxonomy" id="323850"/>
    <lineage>
        <taxon>Bacteria</taxon>
        <taxon>Pseudomonadati</taxon>
        <taxon>Pseudomonadota</taxon>
        <taxon>Gammaproteobacteria</taxon>
        <taxon>Alteromonadales</taxon>
        <taxon>Shewanellaceae</taxon>
        <taxon>Shewanella</taxon>
    </lineage>
</organism>
<dbReference type="EC" id="6.1.1.4" evidence="1"/>
<dbReference type="EMBL" id="CP000606">
    <property type="protein sequence ID" value="ABO24795.1"/>
    <property type="molecule type" value="Genomic_DNA"/>
</dbReference>
<dbReference type="RefSeq" id="WP_011866726.1">
    <property type="nucleotide sequence ID" value="NC_009092.1"/>
</dbReference>
<dbReference type="SMR" id="A3QH47"/>
<dbReference type="STRING" id="323850.Shew_2929"/>
<dbReference type="KEGG" id="slo:Shew_2929"/>
<dbReference type="eggNOG" id="COG0495">
    <property type="taxonomic scope" value="Bacteria"/>
</dbReference>
<dbReference type="HOGENOM" id="CLU_004427_0_0_6"/>
<dbReference type="OrthoDB" id="9810365at2"/>
<dbReference type="Proteomes" id="UP000001558">
    <property type="component" value="Chromosome"/>
</dbReference>
<dbReference type="GO" id="GO:0005829">
    <property type="term" value="C:cytosol"/>
    <property type="evidence" value="ECO:0007669"/>
    <property type="project" value="TreeGrafter"/>
</dbReference>
<dbReference type="GO" id="GO:0002161">
    <property type="term" value="F:aminoacyl-tRNA deacylase activity"/>
    <property type="evidence" value="ECO:0007669"/>
    <property type="project" value="InterPro"/>
</dbReference>
<dbReference type="GO" id="GO:0005524">
    <property type="term" value="F:ATP binding"/>
    <property type="evidence" value="ECO:0007669"/>
    <property type="project" value="UniProtKB-UniRule"/>
</dbReference>
<dbReference type="GO" id="GO:0004823">
    <property type="term" value="F:leucine-tRNA ligase activity"/>
    <property type="evidence" value="ECO:0007669"/>
    <property type="project" value="UniProtKB-UniRule"/>
</dbReference>
<dbReference type="GO" id="GO:0006429">
    <property type="term" value="P:leucyl-tRNA aminoacylation"/>
    <property type="evidence" value="ECO:0007669"/>
    <property type="project" value="UniProtKB-UniRule"/>
</dbReference>
<dbReference type="CDD" id="cd07958">
    <property type="entry name" value="Anticodon_Ia_Leu_BEm"/>
    <property type="match status" value="1"/>
</dbReference>
<dbReference type="CDD" id="cd00812">
    <property type="entry name" value="LeuRS_core"/>
    <property type="match status" value="1"/>
</dbReference>
<dbReference type="FunFam" id="1.10.730.10:FF:000002">
    <property type="entry name" value="Leucine--tRNA ligase"/>
    <property type="match status" value="1"/>
</dbReference>
<dbReference type="FunFam" id="1.10.730.10:FF:000003">
    <property type="entry name" value="Leucine--tRNA ligase"/>
    <property type="match status" value="1"/>
</dbReference>
<dbReference type="FunFam" id="2.20.28.290:FF:000001">
    <property type="entry name" value="Leucine--tRNA ligase"/>
    <property type="match status" value="1"/>
</dbReference>
<dbReference type="FunFam" id="3.10.20.590:FF:000001">
    <property type="entry name" value="Leucine--tRNA ligase"/>
    <property type="match status" value="1"/>
</dbReference>
<dbReference type="FunFam" id="3.40.50.620:FF:000003">
    <property type="entry name" value="Leucine--tRNA ligase"/>
    <property type="match status" value="1"/>
</dbReference>
<dbReference type="FunFam" id="3.40.50.620:FF:000124">
    <property type="entry name" value="Leucine--tRNA ligase"/>
    <property type="match status" value="1"/>
</dbReference>
<dbReference type="FunFam" id="3.90.740.10:FF:000012">
    <property type="entry name" value="Leucine--tRNA ligase"/>
    <property type="match status" value="1"/>
</dbReference>
<dbReference type="Gene3D" id="2.20.28.290">
    <property type="match status" value="1"/>
</dbReference>
<dbReference type="Gene3D" id="3.10.20.590">
    <property type="match status" value="1"/>
</dbReference>
<dbReference type="Gene3D" id="3.40.50.620">
    <property type="entry name" value="HUPs"/>
    <property type="match status" value="2"/>
</dbReference>
<dbReference type="Gene3D" id="1.10.730.10">
    <property type="entry name" value="Isoleucyl-tRNA Synthetase, Domain 1"/>
    <property type="match status" value="1"/>
</dbReference>
<dbReference type="Gene3D" id="3.90.740.10">
    <property type="entry name" value="Valyl/Leucyl/Isoleucyl-tRNA synthetase, editing domain"/>
    <property type="match status" value="1"/>
</dbReference>
<dbReference type="HAMAP" id="MF_00049_B">
    <property type="entry name" value="Leu_tRNA_synth_B"/>
    <property type="match status" value="1"/>
</dbReference>
<dbReference type="InterPro" id="IPR001412">
    <property type="entry name" value="aa-tRNA-synth_I_CS"/>
</dbReference>
<dbReference type="InterPro" id="IPR002300">
    <property type="entry name" value="aa-tRNA-synth_Ia"/>
</dbReference>
<dbReference type="InterPro" id="IPR002302">
    <property type="entry name" value="Leu-tRNA-ligase"/>
</dbReference>
<dbReference type="InterPro" id="IPR025709">
    <property type="entry name" value="Leu_tRNA-synth_edit"/>
</dbReference>
<dbReference type="InterPro" id="IPR013155">
    <property type="entry name" value="M/V/L/I-tRNA-synth_anticd-bd"/>
</dbReference>
<dbReference type="InterPro" id="IPR015413">
    <property type="entry name" value="Methionyl/Leucyl_tRNA_Synth"/>
</dbReference>
<dbReference type="InterPro" id="IPR014729">
    <property type="entry name" value="Rossmann-like_a/b/a_fold"/>
</dbReference>
<dbReference type="InterPro" id="IPR009080">
    <property type="entry name" value="tRNAsynth_Ia_anticodon-bd"/>
</dbReference>
<dbReference type="InterPro" id="IPR009008">
    <property type="entry name" value="Val/Leu/Ile-tRNA-synth_edit"/>
</dbReference>
<dbReference type="NCBIfam" id="TIGR00396">
    <property type="entry name" value="leuS_bact"/>
    <property type="match status" value="1"/>
</dbReference>
<dbReference type="PANTHER" id="PTHR43740:SF2">
    <property type="entry name" value="LEUCINE--TRNA LIGASE, MITOCHONDRIAL"/>
    <property type="match status" value="1"/>
</dbReference>
<dbReference type="PANTHER" id="PTHR43740">
    <property type="entry name" value="LEUCYL-TRNA SYNTHETASE"/>
    <property type="match status" value="1"/>
</dbReference>
<dbReference type="Pfam" id="PF08264">
    <property type="entry name" value="Anticodon_1"/>
    <property type="match status" value="1"/>
</dbReference>
<dbReference type="Pfam" id="PF00133">
    <property type="entry name" value="tRNA-synt_1"/>
    <property type="match status" value="2"/>
</dbReference>
<dbReference type="Pfam" id="PF13603">
    <property type="entry name" value="tRNA-synt_1_2"/>
    <property type="match status" value="1"/>
</dbReference>
<dbReference type="Pfam" id="PF09334">
    <property type="entry name" value="tRNA-synt_1g"/>
    <property type="match status" value="1"/>
</dbReference>
<dbReference type="PRINTS" id="PR00985">
    <property type="entry name" value="TRNASYNTHLEU"/>
</dbReference>
<dbReference type="SUPFAM" id="SSF47323">
    <property type="entry name" value="Anticodon-binding domain of a subclass of class I aminoacyl-tRNA synthetases"/>
    <property type="match status" value="1"/>
</dbReference>
<dbReference type="SUPFAM" id="SSF52374">
    <property type="entry name" value="Nucleotidylyl transferase"/>
    <property type="match status" value="1"/>
</dbReference>
<dbReference type="SUPFAM" id="SSF50677">
    <property type="entry name" value="ValRS/IleRS/LeuRS editing domain"/>
    <property type="match status" value="1"/>
</dbReference>
<dbReference type="PROSITE" id="PS00178">
    <property type="entry name" value="AA_TRNA_LIGASE_I"/>
    <property type="match status" value="1"/>
</dbReference>
<proteinExistence type="inferred from homology"/>
<protein>
    <recommendedName>
        <fullName evidence="1">Leucine--tRNA ligase</fullName>
        <ecNumber evidence="1">6.1.1.4</ecNumber>
    </recommendedName>
    <alternativeName>
        <fullName evidence="1">Leucyl-tRNA synthetase</fullName>
        <shortName evidence="1">LeuRS</shortName>
    </alternativeName>
</protein>
<gene>
    <name evidence="1" type="primary">leuS</name>
    <name type="ordered locus">Shew_2929</name>
</gene>
<name>SYL_SHELP</name>
<feature type="chain" id="PRO_1000009424" description="Leucine--tRNA ligase">
    <location>
        <begin position="1"/>
        <end position="863"/>
    </location>
</feature>
<feature type="short sequence motif" description="'HIGH' region">
    <location>
        <begin position="42"/>
        <end position="52"/>
    </location>
</feature>
<feature type="short sequence motif" description="'KMSKS' region">
    <location>
        <begin position="622"/>
        <end position="626"/>
    </location>
</feature>
<feature type="binding site" evidence="1">
    <location>
        <position position="625"/>
    </location>
    <ligand>
        <name>ATP</name>
        <dbReference type="ChEBI" id="CHEBI:30616"/>
    </ligand>
</feature>
<accession>A3QH47</accession>
<comment type="catalytic activity">
    <reaction evidence="1">
        <text>tRNA(Leu) + L-leucine + ATP = L-leucyl-tRNA(Leu) + AMP + diphosphate</text>
        <dbReference type="Rhea" id="RHEA:11688"/>
        <dbReference type="Rhea" id="RHEA-COMP:9613"/>
        <dbReference type="Rhea" id="RHEA-COMP:9622"/>
        <dbReference type="ChEBI" id="CHEBI:30616"/>
        <dbReference type="ChEBI" id="CHEBI:33019"/>
        <dbReference type="ChEBI" id="CHEBI:57427"/>
        <dbReference type="ChEBI" id="CHEBI:78442"/>
        <dbReference type="ChEBI" id="CHEBI:78494"/>
        <dbReference type="ChEBI" id="CHEBI:456215"/>
        <dbReference type="EC" id="6.1.1.4"/>
    </reaction>
</comment>
<comment type="subcellular location">
    <subcellularLocation>
        <location evidence="1">Cytoplasm</location>
    </subcellularLocation>
</comment>
<comment type="similarity">
    <text evidence="1">Belongs to the class-I aminoacyl-tRNA synthetase family.</text>
</comment>